<accession>B1IQ53</accession>
<dbReference type="EC" id="2.7.11.33" evidence="1"/>
<dbReference type="EC" id="2.7.4.28" evidence="1"/>
<dbReference type="EMBL" id="CP000946">
    <property type="protein sequence ID" value="ACA77574.1"/>
    <property type="molecule type" value="Genomic_DNA"/>
</dbReference>
<dbReference type="RefSeq" id="WP_000368046.1">
    <property type="nucleotide sequence ID" value="NZ_MTFT01000006.1"/>
</dbReference>
<dbReference type="SMR" id="B1IQ53"/>
<dbReference type="GeneID" id="93775866"/>
<dbReference type="KEGG" id="ecl:EcolC_1928"/>
<dbReference type="HOGENOM" id="CLU_046206_1_0_6"/>
<dbReference type="GO" id="GO:0043531">
    <property type="term" value="F:ADP binding"/>
    <property type="evidence" value="ECO:0007669"/>
    <property type="project" value="UniProtKB-UniRule"/>
</dbReference>
<dbReference type="GO" id="GO:0005524">
    <property type="term" value="F:ATP binding"/>
    <property type="evidence" value="ECO:0007669"/>
    <property type="project" value="InterPro"/>
</dbReference>
<dbReference type="GO" id="GO:0016776">
    <property type="term" value="F:phosphotransferase activity, phosphate group as acceptor"/>
    <property type="evidence" value="ECO:0007669"/>
    <property type="project" value="UniProtKB-UniRule"/>
</dbReference>
<dbReference type="GO" id="GO:0004674">
    <property type="term" value="F:protein serine/threonine kinase activity"/>
    <property type="evidence" value="ECO:0007669"/>
    <property type="project" value="UniProtKB-UniRule"/>
</dbReference>
<dbReference type="HAMAP" id="MF_01062">
    <property type="entry name" value="PSRP"/>
    <property type="match status" value="1"/>
</dbReference>
<dbReference type="InterPro" id="IPR005177">
    <property type="entry name" value="Kinase-pyrophosphorylase"/>
</dbReference>
<dbReference type="InterPro" id="IPR026530">
    <property type="entry name" value="PSRP"/>
</dbReference>
<dbReference type="NCBIfam" id="NF003742">
    <property type="entry name" value="PRK05339.1"/>
    <property type="match status" value="1"/>
</dbReference>
<dbReference type="PANTHER" id="PTHR31756">
    <property type="entry name" value="PYRUVATE, PHOSPHATE DIKINASE REGULATORY PROTEIN 1, CHLOROPLASTIC"/>
    <property type="match status" value="1"/>
</dbReference>
<dbReference type="PANTHER" id="PTHR31756:SF3">
    <property type="entry name" value="PYRUVATE, PHOSPHATE DIKINASE REGULATORY PROTEIN 1, CHLOROPLASTIC"/>
    <property type="match status" value="1"/>
</dbReference>
<dbReference type="Pfam" id="PF03618">
    <property type="entry name" value="Kinase-PPPase"/>
    <property type="match status" value="1"/>
</dbReference>
<reference key="1">
    <citation type="submission" date="2008-02" db="EMBL/GenBank/DDBJ databases">
        <title>Complete sequence of Escherichia coli C str. ATCC 8739.</title>
        <authorList>
            <person name="Copeland A."/>
            <person name="Lucas S."/>
            <person name="Lapidus A."/>
            <person name="Glavina del Rio T."/>
            <person name="Dalin E."/>
            <person name="Tice H."/>
            <person name="Bruce D."/>
            <person name="Goodwin L."/>
            <person name="Pitluck S."/>
            <person name="Kiss H."/>
            <person name="Brettin T."/>
            <person name="Detter J.C."/>
            <person name="Han C."/>
            <person name="Kuske C.R."/>
            <person name="Schmutz J."/>
            <person name="Larimer F."/>
            <person name="Land M."/>
            <person name="Hauser L."/>
            <person name="Kyrpides N."/>
            <person name="Mikhailova N."/>
            <person name="Ingram L."/>
            <person name="Richardson P."/>
        </authorList>
    </citation>
    <scope>NUCLEOTIDE SEQUENCE [LARGE SCALE GENOMIC DNA]</scope>
    <source>
        <strain>ATCC 8739 / DSM 1576 / NBRC 3972 / NCIMB 8545 / WDCM 00012 / Crooks</strain>
    </source>
</reference>
<gene>
    <name evidence="1" type="primary">ppsR</name>
    <name type="ordered locus">EcolC_1928</name>
</gene>
<comment type="function">
    <text evidence="1">Bifunctional serine/threonine kinase and phosphorylase involved in the regulation of the phosphoenolpyruvate synthase (PEPS) by catalyzing its phosphorylation/dephosphorylation.</text>
</comment>
<comment type="catalytic activity">
    <reaction evidence="1">
        <text>[pyruvate, water dikinase] + ADP = [pyruvate, water dikinase]-phosphate + AMP + H(+)</text>
        <dbReference type="Rhea" id="RHEA:46020"/>
        <dbReference type="Rhea" id="RHEA-COMP:11425"/>
        <dbReference type="Rhea" id="RHEA-COMP:11426"/>
        <dbReference type="ChEBI" id="CHEBI:15378"/>
        <dbReference type="ChEBI" id="CHEBI:43176"/>
        <dbReference type="ChEBI" id="CHEBI:68546"/>
        <dbReference type="ChEBI" id="CHEBI:456215"/>
        <dbReference type="ChEBI" id="CHEBI:456216"/>
        <dbReference type="EC" id="2.7.11.33"/>
    </reaction>
</comment>
<comment type="catalytic activity">
    <reaction evidence="1">
        <text>[pyruvate, water dikinase]-phosphate + phosphate + H(+) = [pyruvate, water dikinase] + diphosphate</text>
        <dbReference type="Rhea" id="RHEA:48580"/>
        <dbReference type="Rhea" id="RHEA-COMP:11425"/>
        <dbReference type="Rhea" id="RHEA-COMP:11426"/>
        <dbReference type="ChEBI" id="CHEBI:15378"/>
        <dbReference type="ChEBI" id="CHEBI:33019"/>
        <dbReference type="ChEBI" id="CHEBI:43176"/>
        <dbReference type="ChEBI" id="CHEBI:43474"/>
        <dbReference type="ChEBI" id="CHEBI:68546"/>
        <dbReference type="EC" id="2.7.4.28"/>
    </reaction>
</comment>
<comment type="similarity">
    <text evidence="1">Belongs to the pyruvate, phosphate/water dikinase regulatory protein family. PSRP subfamily.</text>
</comment>
<organism>
    <name type="scientific">Escherichia coli (strain ATCC 8739 / DSM 1576 / NBRC 3972 / NCIMB 8545 / WDCM 00012 / Crooks)</name>
    <dbReference type="NCBI Taxonomy" id="481805"/>
    <lineage>
        <taxon>Bacteria</taxon>
        <taxon>Pseudomonadati</taxon>
        <taxon>Pseudomonadota</taxon>
        <taxon>Gammaproteobacteria</taxon>
        <taxon>Enterobacterales</taxon>
        <taxon>Enterobacteriaceae</taxon>
        <taxon>Escherichia</taxon>
    </lineage>
</organism>
<evidence type="ECO:0000255" key="1">
    <source>
        <dbReference type="HAMAP-Rule" id="MF_01062"/>
    </source>
</evidence>
<proteinExistence type="inferred from homology"/>
<feature type="chain" id="PRO_1000084466" description="Phosphoenolpyruvate synthase regulatory protein">
    <location>
        <begin position="1"/>
        <end position="277"/>
    </location>
</feature>
<feature type="binding site" evidence="1">
    <location>
        <begin position="157"/>
        <end position="164"/>
    </location>
    <ligand>
        <name>ADP</name>
        <dbReference type="ChEBI" id="CHEBI:456216"/>
    </ligand>
</feature>
<protein>
    <recommendedName>
        <fullName evidence="1">Phosphoenolpyruvate synthase regulatory protein</fullName>
        <shortName evidence="1">PEP synthase regulatory protein</shortName>
        <shortName evidence="1">PSRP</shortName>
        <ecNumber evidence="1">2.7.11.33</ecNumber>
        <ecNumber evidence="1">2.7.4.28</ecNumber>
    </recommendedName>
    <alternativeName>
        <fullName evidence="1">Pyruvate, water dikinase regulatory protein</fullName>
    </alternativeName>
</protein>
<name>PSRP_ECOLC</name>
<keyword id="KW-0418">Kinase</keyword>
<keyword id="KW-0547">Nucleotide-binding</keyword>
<keyword id="KW-0723">Serine/threonine-protein kinase</keyword>
<keyword id="KW-0808">Transferase</keyword>
<sequence length="277" mass="31211">MDNAVDRHVFYISDGTAITAEVLGHAVMSQFPVTISSITLPFVENESRARAVKDQIDAIYHQTGVRPLVFYSIVLPEIRAIILQSEGFCQDIVQALVAPLQQEMKLDPTPIAHRTHGLNPNNLNKYDARIAAIDYTLAHDDGISLRNLDQAQVILLGVSRCGKTPTSLYLAMQFGIRAANYPFIADDMDNLVLPASLKPLQHKLFGLTIDPERLAAIREERRENSRYASLRQCRMEVAEVEALYRKNQIPWINSTNYSVEEIATKILDIMGLSRRMY</sequence>